<keyword id="KW-0496">Mitochondrion</keyword>
<keyword id="KW-1185">Reference proteome</keyword>
<keyword id="KW-0677">Repeat</keyword>
<keyword id="KW-0809">Transit peptide</keyword>
<sequence>MVMLARSKLALDVSRRSQSLQRICYYASLSSRFSGGGGDDGGGSSPEIGGTDSANEWEKLLKPFDLDSLRNSFHKITPFQLYKLLELPLNVSTSMELFSWTGSQNGYRHSFDVYQVLIGKLGANGEFKTIDRLLIQMKDEGIVFKESLFISIMRDYDKAGFPGQTTRLMLEMRNVYSCEPTFKSYNVVLEILVSGNCHKVAANVFYDMLSRKIPPTLFTFGVVMKAFCAVNEIDSALSLLRDMTKHGCVPNSVIYQTLIHSLSKCNRVNEALQLLEEMFLMGCVPDAETFNDVILGLCKFDRINEAAKMVNRMLIRGFAPDDITYGYLMNGLCKIGRVDAAKDLFYRIPKPEIVIFNTLIHGFVTHGRLDDAKAVLSDMVTSYGIVPDVCTYNSLIYGYWKEGLVGLALEVLHDMRNKGCKPNVYSYTILVDGFCKLGKIDEAYNVLNEMSADGLKPNTVGFNCLISAFCKEHRIPEAVEIFREMPRKGCKPDVYTFNSLISGLCEVDEIKHALWLLRDMISEGVVANTVTYNTLINAFLRRGEIKEARKLVNEMVFQGSPLDEITYNSLIKGLCRAGEVDKARSLFEKMLRDGHAPSNISCNILINGLCRSGMVEEAVEFQKEMVLRGSTPDIVTFNSLINGLCRAGRIEDGLTMFRKLQAEGIPPDTVTFNTLMSWLCKGGFVYDACLLLDEGIEDGFVPNHRTWSILLQSIIPQETLDRRRFYNAAF</sequence>
<evidence type="ECO:0000255" key="1"/>
<evidence type="ECO:0000305" key="2"/>
<feature type="transit peptide" description="Mitochondrion" evidence="1">
    <location>
        <begin position="1"/>
        <end position="18"/>
    </location>
</feature>
<feature type="chain" id="PRO_0000363581" description="Pentatricopeptide repeat-containing protein At5g64320, mitochondrial">
    <location>
        <begin position="19"/>
        <end position="730"/>
    </location>
</feature>
<feature type="repeat" description="PPR 1">
    <location>
        <begin position="110"/>
        <end position="144"/>
    </location>
</feature>
<feature type="repeat" description="PPR 2">
    <location>
        <begin position="145"/>
        <end position="175"/>
    </location>
</feature>
<feature type="repeat" description="PPR 3">
    <location>
        <begin position="181"/>
        <end position="215"/>
    </location>
</feature>
<feature type="repeat" description="PPR 4">
    <location>
        <begin position="216"/>
        <end position="250"/>
    </location>
</feature>
<feature type="repeat" description="PPR 5">
    <location>
        <begin position="251"/>
        <end position="285"/>
    </location>
</feature>
<feature type="repeat" description="PPR 6">
    <location>
        <begin position="286"/>
        <end position="320"/>
    </location>
</feature>
<feature type="repeat" description="PPR 7">
    <location>
        <begin position="321"/>
        <end position="351"/>
    </location>
</feature>
<feature type="repeat" description="PPR 8">
    <location>
        <begin position="352"/>
        <end position="387"/>
    </location>
</feature>
<feature type="repeat" description="PPR 9">
    <location>
        <begin position="388"/>
        <end position="422"/>
    </location>
</feature>
<feature type="repeat" description="PPR 10">
    <location>
        <begin position="423"/>
        <end position="457"/>
    </location>
</feature>
<feature type="repeat" description="PPR 11">
    <location>
        <begin position="458"/>
        <end position="492"/>
    </location>
</feature>
<feature type="repeat" description="PPR 12">
    <location>
        <begin position="493"/>
        <end position="527"/>
    </location>
</feature>
<feature type="repeat" description="PPR 13">
    <location>
        <begin position="528"/>
        <end position="562"/>
    </location>
</feature>
<feature type="repeat" description="PPR 14">
    <location>
        <begin position="563"/>
        <end position="597"/>
    </location>
</feature>
<feature type="repeat" description="PPR 15">
    <location>
        <begin position="598"/>
        <end position="632"/>
    </location>
</feature>
<feature type="repeat" description="PPR 16">
    <location>
        <begin position="633"/>
        <end position="667"/>
    </location>
</feature>
<feature type="repeat" description="PPR 17">
    <location>
        <begin position="668"/>
        <end position="702"/>
    </location>
</feature>
<name>PP444_ARATH</name>
<protein>
    <recommendedName>
        <fullName>Pentatricopeptide repeat-containing protein At5g64320, mitochondrial</fullName>
    </recommendedName>
</protein>
<accession>Q9FMF6</accession>
<comment type="subcellular location">
    <subcellularLocation>
        <location evidence="2">Mitochondrion</location>
    </subcellularLocation>
</comment>
<comment type="similarity">
    <text evidence="2">Belongs to the PPR family. P subfamily.</text>
</comment>
<comment type="online information" name="Pentatricopeptide repeat proteins">
    <link uri="https://ppr.plantenergy.uwa.edu.au"/>
</comment>
<reference key="1">
    <citation type="journal article" date="1997" name="DNA Res.">
        <title>Structural analysis of Arabidopsis thaliana chromosome 5. III. Sequence features of the regions of 1,191,918 bp covered by seventeen physically assigned P1 clones.</title>
        <authorList>
            <person name="Nakamura Y."/>
            <person name="Sato S."/>
            <person name="Kaneko T."/>
            <person name="Kotani H."/>
            <person name="Asamizu E."/>
            <person name="Miyajima N."/>
            <person name="Tabata S."/>
        </authorList>
    </citation>
    <scope>NUCLEOTIDE SEQUENCE [LARGE SCALE GENOMIC DNA]</scope>
    <source>
        <strain>cv. Columbia</strain>
    </source>
</reference>
<reference key="2">
    <citation type="journal article" date="2017" name="Plant J.">
        <title>Araport11: a complete reannotation of the Arabidopsis thaliana reference genome.</title>
        <authorList>
            <person name="Cheng C.Y."/>
            <person name="Krishnakumar V."/>
            <person name="Chan A.P."/>
            <person name="Thibaud-Nissen F."/>
            <person name="Schobel S."/>
            <person name="Town C.D."/>
        </authorList>
    </citation>
    <scope>GENOME REANNOTATION</scope>
    <source>
        <strain>cv. Columbia</strain>
    </source>
</reference>
<reference key="3">
    <citation type="journal article" date="2004" name="Plant Cell">
        <title>Genome-wide analysis of Arabidopsis pentatricopeptide repeat proteins reveals their essential role in organelle biogenesis.</title>
        <authorList>
            <person name="Lurin C."/>
            <person name="Andres C."/>
            <person name="Aubourg S."/>
            <person name="Bellaoui M."/>
            <person name="Bitton F."/>
            <person name="Bruyere C."/>
            <person name="Caboche M."/>
            <person name="Debast C."/>
            <person name="Gualberto J."/>
            <person name="Hoffmann B."/>
            <person name="Lecharny A."/>
            <person name="Le Ret M."/>
            <person name="Martin-Magniette M.-L."/>
            <person name="Mireau H."/>
            <person name="Peeters N."/>
            <person name="Renou J.-P."/>
            <person name="Szurek B."/>
            <person name="Taconnat L."/>
            <person name="Small I."/>
        </authorList>
    </citation>
    <scope>GENE FAMILY</scope>
</reference>
<gene>
    <name type="ordered locus">At5g64320</name>
    <name type="ORF">MSJ1.16</name>
</gene>
<organism>
    <name type="scientific">Arabidopsis thaliana</name>
    <name type="common">Mouse-ear cress</name>
    <dbReference type="NCBI Taxonomy" id="3702"/>
    <lineage>
        <taxon>Eukaryota</taxon>
        <taxon>Viridiplantae</taxon>
        <taxon>Streptophyta</taxon>
        <taxon>Embryophyta</taxon>
        <taxon>Tracheophyta</taxon>
        <taxon>Spermatophyta</taxon>
        <taxon>Magnoliopsida</taxon>
        <taxon>eudicotyledons</taxon>
        <taxon>Gunneridae</taxon>
        <taxon>Pentapetalae</taxon>
        <taxon>rosids</taxon>
        <taxon>malvids</taxon>
        <taxon>Brassicales</taxon>
        <taxon>Brassicaceae</taxon>
        <taxon>Camelineae</taxon>
        <taxon>Arabidopsis</taxon>
    </lineage>
</organism>
<proteinExistence type="evidence at transcript level"/>
<dbReference type="EMBL" id="AB008268">
    <property type="protein sequence ID" value="BAB09863.1"/>
    <property type="molecule type" value="Genomic_DNA"/>
</dbReference>
<dbReference type="EMBL" id="CP002688">
    <property type="protein sequence ID" value="AED97869.1"/>
    <property type="molecule type" value="Genomic_DNA"/>
</dbReference>
<dbReference type="RefSeq" id="NP_201237.1">
    <property type="nucleotide sequence ID" value="NM_125828.3"/>
</dbReference>
<dbReference type="SMR" id="Q9FMF6"/>
<dbReference type="FunCoup" id="Q9FMF6">
    <property type="interactions" value="63"/>
</dbReference>
<dbReference type="STRING" id="3702.Q9FMF6"/>
<dbReference type="PaxDb" id="3702-AT5G64320.1"/>
<dbReference type="ProteomicsDB" id="249325"/>
<dbReference type="EnsemblPlants" id="AT5G64320.1">
    <property type="protein sequence ID" value="AT5G64320.1"/>
    <property type="gene ID" value="AT5G64320"/>
</dbReference>
<dbReference type="GeneID" id="836553"/>
<dbReference type="Gramene" id="AT5G64320.1">
    <property type="protein sequence ID" value="AT5G64320.1"/>
    <property type="gene ID" value="AT5G64320"/>
</dbReference>
<dbReference type="KEGG" id="ath:AT5G64320"/>
<dbReference type="Araport" id="AT5G64320"/>
<dbReference type="TAIR" id="AT5G64320">
    <property type="gene designation" value="MTL1"/>
</dbReference>
<dbReference type="eggNOG" id="KOG4197">
    <property type="taxonomic scope" value="Eukaryota"/>
</dbReference>
<dbReference type="HOGENOM" id="CLU_002706_49_12_1"/>
<dbReference type="InParanoid" id="Q9FMF6"/>
<dbReference type="OMA" id="VPNDVTW"/>
<dbReference type="PhylomeDB" id="Q9FMF6"/>
<dbReference type="PRO" id="PR:Q9FMF6"/>
<dbReference type="Proteomes" id="UP000006548">
    <property type="component" value="Chromosome 5"/>
</dbReference>
<dbReference type="ExpressionAtlas" id="Q9FMF6">
    <property type="expression patterns" value="baseline and differential"/>
</dbReference>
<dbReference type="GO" id="GO:0005739">
    <property type="term" value="C:mitochondrion"/>
    <property type="evidence" value="ECO:0000314"/>
    <property type="project" value="TAIR"/>
</dbReference>
<dbReference type="GO" id="GO:0032543">
    <property type="term" value="P:mitochondrial translation"/>
    <property type="evidence" value="ECO:0000315"/>
    <property type="project" value="TAIR"/>
</dbReference>
<dbReference type="FunFam" id="1.25.40.10:FF:000294">
    <property type="entry name" value="Pentatricopeptide repeat-containing protein At1g09900"/>
    <property type="match status" value="2"/>
</dbReference>
<dbReference type="Gene3D" id="1.25.40.10">
    <property type="entry name" value="Tetratricopeptide repeat domain"/>
    <property type="match status" value="7"/>
</dbReference>
<dbReference type="InterPro" id="IPR002885">
    <property type="entry name" value="Pentatricopeptide_rpt"/>
</dbReference>
<dbReference type="InterPro" id="IPR011990">
    <property type="entry name" value="TPR-like_helical_dom_sf"/>
</dbReference>
<dbReference type="NCBIfam" id="TIGR00756">
    <property type="entry name" value="PPR"/>
    <property type="match status" value="14"/>
</dbReference>
<dbReference type="PANTHER" id="PTHR47447">
    <property type="entry name" value="OS03G0856100 PROTEIN"/>
    <property type="match status" value="1"/>
</dbReference>
<dbReference type="PANTHER" id="PTHR47447:SF22">
    <property type="entry name" value="TETRATRICOPEPTIDE-LIKE HELICAL DOMAIN SUPERFAMILY"/>
    <property type="match status" value="1"/>
</dbReference>
<dbReference type="Pfam" id="PF01535">
    <property type="entry name" value="PPR"/>
    <property type="match status" value="1"/>
</dbReference>
<dbReference type="Pfam" id="PF12854">
    <property type="entry name" value="PPR_1"/>
    <property type="match status" value="2"/>
</dbReference>
<dbReference type="Pfam" id="PF13041">
    <property type="entry name" value="PPR_2"/>
    <property type="match status" value="6"/>
</dbReference>
<dbReference type="SUPFAM" id="SSF81901">
    <property type="entry name" value="HCP-like"/>
    <property type="match status" value="1"/>
</dbReference>
<dbReference type="PROSITE" id="PS51375">
    <property type="entry name" value="PPR"/>
    <property type="match status" value="16"/>
</dbReference>